<evidence type="ECO:0000250" key="1"/>
<evidence type="ECO:0000255" key="2">
    <source>
        <dbReference type="PROSITE-ProRule" id="PRU00182"/>
    </source>
</evidence>
<evidence type="ECO:0000305" key="3"/>
<feature type="chain" id="PRO_0000162740" description="Uncharacterized RNA pseudouridine synthase MG209 homolog">
    <location>
        <begin position="1"/>
        <end position="309"/>
    </location>
</feature>
<feature type="domain" description="S4 RNA-binding" evidence="2">
    <location>
        <begin position="11"/>
        <end position="87"/>
    </location>
</feature>
<feature type="active site" evidence="1">
    <location>
        <position position="131"/>
    </location>
</feature>
<proteinExistence type="inferred from homology"/>
<accession>P75485</accession>
<keyword id="KW-0413">Isomerase</keyword>
<keyword id="KW-1185">Reference proteome</keyword>
<keyword id="KW-0694">RNA-binding</keyword>
<name>Y292_MYCPN</name>
<organism>
    <name type="scientific">Mycoplasma pneumoniae (strain ATCC 29342 / M129 / Subtype 1)</name>
    <name type="common">Mycoplasmoides pneumoniae</name>
    <dbReference type="NCBI Taxonomy" id="272634"/>
    <lineage>
        <taxon>Bacteria</taxon>
        <taxon>Bacillati</taxon>
        <taxon>Mycoplasmatota</taxon>
        <taxon>Mycoplasmoidales</taxon>
        <taxon>Mycoplasmoidaceae</taxon>
        <taxon>Mycoplasmoides</taxon>
    </lineage>
</organism>
<sequence length="309" mass="35229">MEQTFSVTTAQRLDTFLATLLNLSRVKVAKLIVDGLVSVNGKKITKNGWLVQPEDRVHVNWSEELFEKVPVEVQPYDFPLDILYEDEQIMVVNKPNGLISHPTSFNESESLLGAALFHCNHQPVFLVHRLDRDTSGVIMLAKNQSSLLHLQKQLQQRVMKRYYLALVHFPLDSLSGTISAPLERVGNNKVMWKVGNSSNKAKNAFTKFTVLNQNEKAALIKCELLTGRTHQIRVHLQFIKHPVYNDPLYGLKSEQATEYGQYLHAQQISFIHPTLNKEMGFEAQLDKTFSDKLDNLNLKIANSLYALFQ</sequence>
<dbReference type="EC" id="5.4.99.-"/>
<dbReference type="EMBL" id="U00089">
    <property type="protein sequence ID" value="AAB96191.1"/>
    <property type="molecule type" value="Genomic_DNA"/>
</dbReference>
<dbReference type="PIR" id="S73869">
    <property type="entry name" value="S73869"/>
</dbReference>
<dbReference type="RefSeq" id="NP_109980.1">
    <property type="nucleotide sequence ID" value="NC_000912.1"/>
</dbReference>
<dbReference type="RefSeq" id="WP_010874649.1">
    <property type="nucleotide sequence ID" value="NZ_OU342337.1"/>
</dbReference>
<dbReference type="SMR" id="P75485"/>
<dbReference type="IntAct" id="P75485">
    <property type="interactions" value="4"/>
</dbReference>
<dbReference type="STRING" id="272634.MPN_292"/>
<dbReference type="EnsemblBacteria" id="AAB96191">
    <property type="protein sequence ID" value="AAB96191"/>
    <property type="gene ID" value="MPN_292"/>
</dbReference>
<dbReference type="KEGG" id="mpn:MPN_292"/>
<dbReference type="PATRIC" id="fig|272634.6.peg.316"/>
<dbReference type="HOGENOM" id="CLU_016902_4_4_14"/>
<dbReference type="OrthoDB" id="9807829at2"/>
<dbReference type="BioCyc" id="MPNE272634:G1GJ3-460-MONOMER"/>
<dbReference type="Proteomes" id="UP000000808">
    <property type="component" value="Chromosome"/>
</dbReference>
<dbReference type="GO" id="GO:0003723">
    <property type="term" value="F:RNA binding"/>
    <property type="evidence" value="ECO:0007669"/>
    <property type="project" value="UniProtKB-KW"/>
</dbReference>
<dbReference type="GO" id="GO:0120159">
    <property type="term" value="F:rRNA pseudouridine synthase activity"/>
    <property type="evidence" value="ECO:0007669"/>
    <property type="project" value="UniProtKB-ARBA"/>
</dbReference>
<dbReference type="GO" id="GO:0000455">
    <property type="term" value="P:enzyme-directed rRNA pseudouridine synthesis"/>
    <property type="evidence" value="ECO:0007669"/>
    <property type="project" value="UniProtKB-ARBA"/>
</dbReference>
<dbReference type="CDD" id="cd02869">
    <property type="entry name" value="PseudoU_synth_RluA_like"/>
    <property type="match status" value="1"/>
</dbReference>
<dbReference type="CDD" id="cd00165">
    <property type="entry name" value="S4"/>
    <property type="match status" value="1"/>
</dbReference>
<dbReference type="Gene3D" id="3.30.2350.10">
    <property type="entry name" value="Pseudouridine synthase"/>
    <property type="match status" value="1"/>
</dbReference>
<dbReference type="Gene3D" id="3.10.290.10">
    <property type="entry name" value="RNA-binding S4 domain"/>
    <property type="match status" value="1"/>
</dbReference>
<dbReference type="InterPro" id="IPR020103">
    <property type="entry name" value="PsdUridine_synth_cat_dom_sf"/>
</dbReference>
<dbReference type="InterPro" id="IPR006224">
    <property type="entry name" value="PsdUridine_synth_RluA-like_CS"/>
</dbReference>
<dbReference type="InterPro" id="IPR006225">
    <property type="entry name" value="PsdUridine_synth_RluC/D"/>
</dbReference>
<dbReference type="InterPro" id="IPR006145">
    <property type="entry name" value="PsdUridine_synth_RsuA/RluA"/>
</dbReference>
<dbReference type="InterPro" id="IPR050188">
    <property type="entry name" value="RluA_PseudoU_synthase"/>
</dbReference>
<dbReference type="InterPro" id="IPR002942">
    <property type="entry name" value="S4_RNA-bd"/>
</dbReference>
<dbReference type="InterPro" id="IPR036986">
    <property type="entry name" value="S4_RNA-bd_sf"/>
</dbReference>
<dbReference type="NCBIfam" id="TIGR00005">
    <property type="entry name" value="rluA_subfam"/>
    <property type="match status" value="1"/>
</dbReference>
<dbReference type="PANTHER" id="PTHR21600">
    <property type="entry name" value="MITOCHONDRIAL RNA PSEUDOURIDINE SYNTHASE"/>
    <property type="match status" value="1"/>
</dbReference>
<dbReference type="PANTHER" id="PTHR21600:SF44">
    <property type="entry name" value="RIBOSOMAL LARGE SUBUNIT PSEUDOURIDINE SYNTHASE D"/>
    <property type="match status" value="1"/>
</dbReference>
<dbReference type="Pfam" id="PF00849">
    <property type="entry name" value="PseudoU_synth_2"/>
    <property type="match status" value="1"/>
</dbReference>
<dbReference type="Pfam" id="PF01479">
    <property type="entry name" value="S4"/>
    <property type="match status" value="1"/>
</dbReference>
<dbReference type="SMART" id="SM00363">
    <property type="entry name" value="S4"/>
    <property type="match status" value="1"/>
</dbReference>
<dbReference type="SUPFAM" id="SSF55174">
    <property type="entry name" value="Alpha-L RNA-binding motif"/>
    <property type="match status" value="1"/>
</dbReference>
<dbReference type="SUPFAM" id="SSF55120">
    <property type="entry name" value="Pseudouridine synthase"/>
    <property type="match status" value="1"/>
</dbReference>
<dbReference type="PROSITE" id="PS01129">
    <property type="entry name" value="PSI_RLU"/>
    <property type="match status" value="1"/>
</dbReference>
<dbReference type="PROSITE" id="PS50889">
    <property type="entry name" value="S4"/>
    <property type="match status" value="1"/>
</dbReference>
<protein>
    <recommendedName>
        <fullName>Uncharacterized RNA pseudouridine synthase MG209 homolog</fullName>
        <ecNumber>5.4.99.-</ecNumber>
    </recommendedName>
    <alternativeName>
        <fullName>RNA pseudouridylate synthase</fullName>
    </alternativeName>
    <alternativeName>
        <fullName>RNA-uridine isomerase</fullName>
    </alternativeName>
</protein>
<reference key="1">
    <citation type="journal article" date="1996" name="Nucleic Acids Res.">
        <title>Complete sequence analysis of the genome of the bacterium Mycoplasma pneumoniae.</title>
        <authorList>
            <person name="Himmelreich R."/>
            <person name="Hilbert H."/>
            <person name="Plagens H."/>
            <person name="Pirkl E."/>
            <person name="Li B.-C."/>
            <person name="Herrmann R."/>
        </authorList>
    </citation>
    <scope>NUCLEOTIDE SEQUENCE [LARGE SCALE GENOMIC DNA]</scope>
    <source>
        <strain>ATCC 29342 / M129 / Subtype 1</strain>
    </source>
</reference>
<gene>
    <name type="ordered locus">MPN_292</name>
    <name type="ORF">H10_orf309</name>
    <name type="ORF">MP543</name>
</gene>
<comment type="catalytic activity">
    <reaction>
        <text>a uridine in RNA = a pseudouridine in RNA</text>
        <dbReference type="Rhea" id="RHEA:48348"/>
        <dbReference type="Rhea" id="RHEA-COMP:12068"/>
        <dbReference type="Rhea" id="RHEA-COMP:12069"/>
        <dbReference type="ChEBI" id="CHEBI:65314"/>
        <dbReference type="ChEBI" id="CHEBI:65315"/>
    </reaction>
</comment>
<comment type="similarity">
    <text evidence="3">Belongs to the pseudouridine synthase RluA family.</text>
</comment>